<feature type="chain" id="PRO_0000194263" description="Mannose-1-phosphate guanylyltransferase">
    <location>
        <begin position="1"/>
        <end position="512"/>
    </location>
</feature>
<organism>
    <name type="scientific">Sinorhizobium fredii (strain NBRC 101917 / NGR234)</name>
    <dbReference type="NCBI Taxonomy" id="394"/>
    <lineage>
        <taxon>Bacteria</taxon>
        <taxon>Pseudomonadati</taxon>
        <taxon>Pseudomonadota</taxon>
        <taxon>Alphaproteobacteria</taxon>
        <taxon>Hyphomicrobiales</taxon>
        <taxon>Rhizobiaceae</taxon>
        <taxon>Sinorhizobium/Ensifer group</taxon>
        <taxon>Sinorhizobium</taxon>
    </lineage>
</organism>
<dbReference type="EC" id="2.7.7.13"/>
<dbReference type="EMBL" id="U00090">
    <property type="protein sequence ID" value="AAB91607.1"/>
    <property type="molecule type" value="Genomic_DNA"/>
</dbReference>
<dbReference type="RefSeq" id="NP_443769.1">
    <property type="nucleotide sequence ID" value="NC_000914.2"/>
</dbReference>
<dbReference type="SMR" id="P55357"/>
<dbReference type="KEGG" id="rhi:NGR_a00380"/>
<dbReference type="PATRIC" id="fig|394.7.peg.36"/>
<dbReference type="eggNOG" id="COG0662">
    <property type="taxonomic scope" value="Bacteria"/>
</dbReference>
<dbReference type="eggNOG" id="COG0836">
    <property type="taxonomic scope" value="Bacteria"/>
</dbReference>
<dbReference type="HOGENOM" id="CLU_035527_1_0_5"/>
<dbReference type="OrthoDB" id="9806359at2"/>
<dbReference type="Proteomes" id="UP000001054">
    <property type="component" value="Plasmid pNGR234a"/>
</dbReference>
<dbReference type="GO" id="GO:0005525">
    <property type="term" value="F:GTP binding"/>
    <property type="evidence" value="ECO:0007669"/>
    <property type="project" value="UniProtKB-KW"/>
</dbReference>
<dbReference type="GO" id="GO:0004475">
    <property type="term" value="F:mannose-1-phosphate guanylyltransferase (GTP) activity"/>
    <property type="evidence" value="ECO:0007669"/>
    <property type="project" value="UniProtKB-EC"/>
</dbReference>
<dbReference type="GO" id="GO:0009298">
    <property type="term" value="P:GDP-mannose biosynthetic process"/>
    <property type="evidence" value="ECO:0007669"/>
    <property type="project" value="TreeGrafter"/>
</dbReference>
<dbReference type="GO" id="GO:0000271">
    <property type="term" value="P:polysaccharide biosynthetic process"/>
    <property type="evidence" value="ECO:0007669"/>
    <property type="project" value="InterPro"/>
</dbReference>
<dbReference type="CDD" id="cd02213">
    <property type="entry name" value="cupin_PMI_typeII_C"/>
    <property type="match status" value="1"/>
</dbReference>
<dbReference type="CDD" id="cd02509">
    <property type="entry name" value="GDP-M1P_Guanylyltransferase"/>
    <property type="match status" value="1"/>
</dbReference>
<dbReference type="FunFam" id="3.90.550.10:FF:000046">
    <property type="entry name" value="Mannose-1-phosphate guanylyltransferase (GDP)"/>
    <property type="match status" value="1"/>
</dbReference>
<dbReference type="FunFam" id="2.60.120.10:FF:000032">
    <property type="entry name" value="Mannose-1-phosphate guanylyltransferase/mannose-6-phosphate isomerase"/>
    <property type="match status" value="1"/>
</dbReference>
<dbReference type="Gene3D" id="2.60.120.10">
    <property type="entry name" value="Jelly Rolls"/>
    <property type="match status" value="1"/>
</dbReference>
<dbReference type="Gene3D" id="3.90.550.10">
    <property type="entry name" value="Spore Coat Polysaccharide Biosynthesis Protein SpsA, Chain A"/>
    <property type="match status" value="1"/>
</dbReference>
<dbReference type="InterPro" id="IPR049577">
    <property type="entry name" value="GMPP_N"/>
</dbReference>
<dbReference type="InterPro" id="IPR006375">
    <property type="entry name" value="Man1P_GuaTrfase/Man6P_Isoase"/>
</dbReference>
<dbReference type="InterPro" id="IPR001538">
    <property type="entry name" value="Man6P_isomerase-2_C"/>
</dbReference>
<dbReference type="InterPro" id="IPR054566">
    <property type="entry name" value="ManC/GMP-like_b-helix"/>
</dbReference>
<dbReference type="InterPro" id="IPR051161">
    <property type="entry name" value="Mannose-6P_isomerase_type2"/>
</dbReference>
<dbReference type="InterPro" id="IPR005835">
    <property type="entry name" value="NTP_transferase_dom"/>
</dbReference>
<dbReference type="InterPro" id="IPR029044">
    <property type="entry name" value="Nucleotide-diphossugar_trans"/>
</dbReference>
<dbReference type="InterPro" id="IPR014710">
    <property type="entry name" value="RmlC-like_jellyroll"/>
</dbReference>
<dbReference type="InterPro" id="IPR011051">
    <property type="entry name" value="RmlC_Cupin_sf"/>
</dbReference>
<dbReference type="NCBIfam" id="TIGR01479">
    <property type="entry name" value="GMP_PMI"/>
    <property type="match status" value="1"/>
</dbReference>
<dbReference type="PANTHER" id="PTHR46390">
    <property type="entry name" value="MANNOSE-1-PHOSPHATE GUANYLYLTRANSFERASE"/>
    <property type="match status" value="1"/>
</dbReference>
<dbReference type="PANTHER" id="PTHR46390:SF1">
    <property type="entry name" value="MANNOSE-1-PHOSPHATE GUANYLYLTRANSFERASE"/>
    <property type="match status" value="1"/>
</dbReference>
<dbReference type="Pfam" id="PF22640">
    <property type="entry name" value="ManC_GMP_beta-helix"/>
    <property type="match status" value="1"/>
</dbReference>
<dbReference type="Pfam" id="PF01050">
    <property type="entry name" value="MannoseP_isomer"/>
    <property type="match status" value="1"/>
</dbReference>
<dbReference type="Pfam" id="PF00483">
    <property type="entry name" value="NTP_transferase"/>
    <property type="match status" value="1"/>
</dbReference>
<dbReference type="SUPFAM" id="SSF53448">
    <property type="entry name" value="Nucleotide-diphospho-sugar transferases"/>
    <property type="match status" value="1"/>
</dbReference>
<dbReference type="SUPFAM" id="SSF51182">
    <property type="entry name" value="RmlC-like cupins"/>
    <property type="match status" value="1"/>
</dbReference>
<geneLocation type="plasmid">
    <name>sym pNGR234a</name>
</geneLocation>
<protein>
    <recommendedName>
        <fullName>Mannose-1-phosphate guanylyltransferase</fullName>
        <ecNumber>2.7.7.13</ecNumber>
    </recommendedName>
    <alternativeName>
        <fullName>GDP-mannose pyrophosphorylase</fullName>
        <shortName>GMP</shortName>
        <shortName>GMPP</shortName>
    </alternativeName>
</protein>
<evidence type="ECO:0000305" key="1"/>
<sequence>MNSHPLMRLLRSRHTVMKLPSNAIKNDTMLPKIIPAIMAGGRGTRLWPLSRATAAKQFLKLIGEETLFQDTLKRVSDAKVYGAPLVITNEEFRFLVAEQARELGVTLSSIVLEPVPRNTAAAVAVAARIVADRFGEDALLLVLPSDHAITVDDTYKKCVRSACIAAAEGKLVTFGIQPTWPATGYGYIERGTYLGKDVHAVQCFVEKPSLEKAAALLETGNYYWNSGMFLFQAASIIAELEEHAPDVLSAVHAAVRGSTVDADFIRLAPESFSQAPSISIDYALMEKTANAAVVCSDFAWSDLGSWDAVWKNEEQNADGNVLKGNVTACNTKNSLVLSHTAHLAVQGMDGVAVIASEDAVFVGRLEEAHEIGNLVKRLAADENTARLTELHPTLIRPWGGYTTMLNGDRFQVRRLFVRPGKMLSLHKHFHRSEHWICVKGTAEVTIEDRVTILHENQSIYIPEGAIHRLGNPGKIMLELVEIQTGAYLGEDDIIRVADESRNEMPDSRRTGP</sequence>
<accession>P55357</accession>
<name>NOEJ_SINFN</name>
<gene>
    <name type="primary">noeJ</name>
    <name type="ordered locus">NGR_a00380</name>
    <name type="ORF">y4aJ</name>
</gene>
<keyword id="KW-0342">GTP-binding</keyword>
<keyword id="KW-0536">Nodulation</keyword>
<keyword id="KW-0547">Nucleotide-binding</keyword>
<keyword id="KW-0548">Nucleotidyltransferase</keyword>
<keyword id="KW-0614">Plasmid</keyword>
<keyword id="KW-1185">Reference proteome</keyword>
<keyword id="KW-0808">Transferase</keyword>
<comment type="catalytic activity">
    <reaction>
        <text>alpha-D-mannose 1-phosphate + GTP + H(+) = GDP-alpha-D-mannose + diphosphate</text>
        <dbReference type="Rhea" id="RHEA:15229"/>
        <dbReference type="ChEBI" id="CHEBI:15378"/>
        <dbReference type="ChEBI" id="CHEBI:33019"/>
        <dbReference type="ChEBI" id="CHEBI:37565"/>
        <dbReference type="ChEBI" id="CHEBI:57527"/>
        <dbReference type="ChEBI" id="CHEBI:58409"/>
        <dbReference type="EC" id="2.7.7.13"/>
    </reaction>
</comment>
<comment type="similarity">
    <text evidence="1">Belongs to the mannose-6-phosphate isomerase type 2 family.</text>
</comment>
<proteinExistence type="inferred from homology"/>
<reference key="1">
    <citation type="journal article" date="1997" name="Nature">
        <title>Molecular basis of symbiosis between Rhizobium and legumes.</title>
        <authorList>
            <person name="Freiberg C.A."/>
            <person name="Fellay R."/>
            <person name="Bairoch A."/>
            <person name="Broughton W.J."/>
            <person name="Rosenthal A."/>
            <person name="Perret X."/>
        </authorList>
    </citation>
    <scope>NUCLEOTIDE SEQUENCE [LARGE SCALE GENOMIC DNA]</scope>
    <source>
        <strain>NBRC 101917 / NGR234</strain>
    </source>
</reference>
<reference key="2">
    <citation type="journal article" date="2009" name="Appl. Environ. Microbiol.">
        <title>Rhizobium sp. strain NGR234 possesses a remarkable number of secretion systems.</title>
        <authorList>
            <person name="Schmeisser C."/>
            <person name="Liesegang H."/>
            <person name="Krysciak D."/>
            <person name="Bakkou N."/>
            <person name="Le Quere A."/>
            <person name="Wollherr A."/>
            <person name="Heinemeyer I."/>
            <person name="Morgenstern B."/>
            <person name="Pommerening-Roeser A."/>
            <person name="Flores M."/>
            <person name="Palacios R."/>
            <person name="Brenner S."/>
            <person name="Gottschalk G."/>
            <person name="Schmitz R.A."/>
            <person name="Broughton W.J."/>
            <person name="Perret X."/>
            <person name="Strittmatter A.W."/>
            <person name="Streit W.R."/>
        </authorList>
    </citation>
    <scope>NUCLEOTIDE SEQUENCE [LARGE SCALE GENOMIC DNA]</scope>
    <source>
        <strain>NBRC 101917 / NGR234</strain>
    </source>
</reference>